<reference key="1">
    <citation type="journal article" date="2000" name="Genome Res.">
        <title>Identification of novel human genes evolutionarily conserved in Caenorhabditis elegans by comparative proteomics.</title>
        <authorList>
            <person name="Lai C.-H."/>
            <person name="Chou C.-Y."/>
            <person name="Ch'ang L.-Y."/>
            <person name="Liu C.-S."/>
            <person name="Lin W.-C."/>
        </authorList>
    </citation>
    <scope>NUCLEOTIDE SEQUENCE [LARGE SCALE MRNA]</scope>
</reference>
<reference key="2">
    <citation type="journal article" date="2004" name="Nat. Genet.">
        <title>Complete sequencing and characterization of 21,243 full-length human cDNAs.</title>
        <authorList>
            <person name="Ota T."/>
            <person name="Suzuki Y."/>
            <person name="Nishikawa T."/>
            <person name="Otsuki T."/>
            <person name="Sugiyama T."/>
            <person name="Irie R."/>
            <person name="Wakamatsu A."/>
            <person name="Hayashi K."/>
            <person name="Sato H."/>
            <person name="Nagai K."/>
            <person name="Kimura K."/>
            <person name="Makita H."/>
            <person name="Sekine M."/>
            <person name="Obayashi M."/>
            <person name="Nishi T."/>
            <person name="Shibahara T."/>
            <person name="Tanaka T."/>
            <person name="Ishii S."/>
            <person name="Yamamoto J."/>
            <person name="Saito K."/>
            <person name="Kawai Y."/>
            <person name="Isono Y."/>
            <person name="Nakamura Y."/>
            <person name="Nagahari K."/>
            <person name="Murakami K."/>
            <person name="Yasuda T."/>
            <person name="Iwayanagi T."/>
            <person name="Wagatsuma M."/>
            <person name="Shiratori A."/>
            <person name="Sudo H."/>
            <person name="Hosoiri T."/>
            <person name="Kaku Y."/>
            <person name="Kodaira H."/>
            <person name="Kondo H."/>
            <person name="Sugawara M."/>
            <person name="Takahashi M."/>
            <person name="Kanda K."/>
            <person name="Yokoi T."/>
            <person name="Furuya T."/>
            <person name="Kikkawa E."/>
            <person name="Omura Y."/>
            <person name="Abe K."/>
            <person name="Kamihara K."/>
            <person name="Katsuta N."/>
            <person name="Sato K."/>
            <person name="Tanikawa M."/>
            <person name="Yamazaki M."/>
            <person name="Ninomiya K."/>
            <person name="Ishibashi T."/>
            <person name="Yamashita H."/>
            <person name="Murakawa K."/>
            <person name="Fujimori K."/>
            <person name="Tanai H."/>
            <person name="Kimata M."/>
            <person name="Watanabe M."/>
            <person name="Hiraoka S."/>
            <person name="Chiba Y."/>
            <person name="Ishida S."/>
            <person name="Ono Y."/>
            <person name="Takiguchi S."/>
            <person name="Watanabe S."/>
            <person name="Yosida M."/>
            <person name="Hotuta T."/>
            <person name="Kusano J."/>
            <person name="Kanehori K."/>
            <person name="Takahashi-Fujii A."/>
            <person name="Hara H."/>
            <person name="Tanase T.-O."/>
            <person name="Nomura Y."/>
            <person name="Togiya S."/>
            <person name="Komai F."/>
            <person name="Hara R."/>
            <person name="Takeuchi K."/>
            <person name="Arita M."/>
            <person name="Imose N."/>
            <person name="Musashino K."/>
            <person name="Yuuki H."/>
            <person name="Oshima A."/>
            <person name="Sasaki N."/>
            <person name="Aotsuka S."/>
            <person name="Yoshikawa Y."/>
            <person name="Matsunawa H."/>
            <person name="Ichihara T."/>
            <person name="Shiohata N."/>
            <person name="Sano S."/>
            <person name="Moriya S."/>
            <person name="Momiyama H."/>
            <person name="Satoh N."/>
            <person name="Takami S."/>
            <person name="Terashima Y."/>
            <person name="Suzuki O."/>
            <person name="Nakagawa S."/>
            <person name="Senoh A."/>
            <person name="Mizoguchi H."/>
            <person name="Goto Y."/>
            <person name="Shimizu F."/>
            <person name="Wakebe H."/>
            <person name="Hishigaki H."/>
            <person name="Watanabe T."/>
            <person name="Sugiyama A."/>
            <person name="Takemoto M."/>
            <person name="Kawakami B."/>
            <person name="Yamazaki M."/>
            <person name="Watanabe K."/>
            <person name="Kumagai A."/>
            <person name="Itakura S."/>
            <person name="Fukuzumi Y."/>
            <person name="Fujimori Y."/>
            <person name="Komiyama M."/>
            <person name="Tashiro H."/>
            <person name="Tanigami A."/>
            <person name="Fujiwara T."/>
            <person name="Ono T."/>
            <person name="Yamada K."/>
            <person name="Fujii Y."/>
            <person name="Ozaki K."/>
            <person name="Hirao M."/>
            <person name="Ohmori Y."/>
            <person name="Kawabata A."/>
            <person name="Hikiji T."/>
            <person name="Kobatake N."/>
            <person name="Inagaki H."/>
            <person name="Ikema Y."/>
            <person name="Okamoto S."/>
            <person name="Okitani R."/>
            <person name="Kawakami T."/>
            <person name="Noguchi S."/>
            <person name="Itoh T."/>
            <person name="Shigeta K."/>
            <person name="Senba T."/>
            <person name="Matsumura K."/>
            <person name="Nakajima Y."/>
            <person name="Mizuno T."/>
            <person name="Morinaga M."/>
            <person name="Sasaki M."/>
            <person name="Togashi T."/>
            <person name="Oyama M."/>
            <person name="Hata H."/>
            <person name="Watanabe M."/>
            <person name="Komatsu T."/>
            <person name="Mizushima-Sugano J."/>
            <person name="Satoh T."/>
            <person name="Shirai Y."/>
            <person name="Takahashi Y."/>
            <person name="Nakagawa K."/>
            <person name="Okumura K."/>
            <person name="Nagase T."/>
            <person name="Nomura N."/>
            <person name="Kikuchi H."/>
            <person name="Masuho Y."/>
            <person name="Yamashita R."/>
            <person name="Nakai K."/>
            <person name="Yada T."/>
            <person name="Nakamura Y."/>
            <person name="Ohara O."/>
            <person name="Isogai T."/>
            <person name="Sugano S."/>
        </authorList>
    </citation>
    <scope>NUCLEOTIDE SEQUENCE [LARGE SCALE MRNA]</scope>
    <source>
        <tissue>Cerebellum</tissue>
    </source>
</reference>
<reference key="3">
    <citation type="journal article" date="2006" name="Nature">
        <title>The DNA sequence and biological annotation of human chromosome 1.</title>
        <authorList>
            <person name="Gregory S.G."/>
            <person name="Barlow K.F."/>
            <person name="McLay K.E."/>
            <person name="Kaul R."/>
            <person name="Swarbreck D."/>
            <person name="Dunham A."/>
            <person name="Scott C.E."/>
            <person name="Howe K.L."/>
            <person name="Woodfine K."/>
            <person name="Spencer C.C.A."/>
            <person name="Jones M.C."/>
            <person name="Gillson C."/>
            <person name="Searle S."/>
            <person name="Zhou Y."/>
            <person name="Kokocinski F."/>
            <person name="McDonald L."/>
            <person name="Evans R."/>
            <person name="Phillips K."/>
            <person name="Atkinson A."/>
            <person name="Cooper R."/>
            <person name="Jones C."/>
            <person name="Hall R.E."/>
            <person name="Andrews T.D."/>
            <person name="Lloyd C."/>
            <person name="Ainscough R."/>
            <person name="Almeida J.P."/>
            <person name="Ambrose K.D."/>
            <person name="Anderson F."/>
            <person name="Andrew R.W."/>
            <person name="Ashwell R.I.S."/>
            <person name="Aubin K."/>
            <person name="Babbage A.K."/>
            <person name="Bagguley C.L."/>
            <person name="Bailey J."/>
            <person name="Beasley H."/>
            <person name="Bethel G."/>
            <person name="Bird C.P."/>
            <person name="Bray-Allen S."/>
            <person name="Brown J.Y."/>
            <person name="Brown A.J."/>
            <person name="Buckley D."/>
            <person name="Burton J."/>
            <person name="Bye J."/>
            <person name="Carder C."/>
            <person name="Chapman J.C."/>
            <person name="Clark S.Y."/>
            <person name="Clarke G."/>
            <person name="Clee C."/>
            <person name="Cobley V."/>
            <person name="Collier R.E."/>
            <person name="Corby N."/>
            <person name="Coville G.J."/>
            <person name="Davies J."/>
            <person name="Deadman R."/>
            <person name="Dunn M."/>
            <person name="Earthrowl M."/>
            <person name="Ellington A.G."/>
            <person name="Errington H."/>
            <person name="Frankish A."/>
            <person name="Frankland J."/>
            <person name="French L."/>
            <person name="Garner P."/>
            <person name="Garnett J."/>
            <person name="Gay L."/>
            <person name="Ghori M.R.J."/>
            <person name="Gibson R."/>
            <person name="Gilby L.M."/>
            <person name="Gillett W."/>
            <person name="Glithero R.J."/>
            <person name="Grafham D.V."/>
            <person name="Griffiths C."/>
            <person name="Griffiths-Jones S."/>
            <person name="Grocock R."/>
            <person name="Hammond S."/>
            <person name="Harrison E.S.I."/>
            <person name="Hart E."/>
            <person name="Haugen E."/>
            <person name="Heath P.D."/>
            <person name="Holmes S."/>
            <person name="Holt K."/>
            <person name="Howden P.J."/>
            <person name="Hunt A.R."/>
            <person name="Hunt S.E."/>
            <person name="Hunter G."/>
            <person name="Isherwood J."/>
            <person name="James R."/>
            <person name="Johnson C."/>
            <person name="Johnson D."/>
            <person name="Joy A."/>
            <person name="Kay M."/>
            <person name="Kershaw J.K."/>
            <person name="Kibukawa M."/>
            <person name="Kimberley A.M."/>
            <person name="King A."/>
            <person name="Knights A.J."/>
            <person name="Lad H."/>
            <person name="Laird G."/>
            <person name="Lawlor S."/>
            <person name="Leongamornlert D.A."/>
            <person name="Lloyd D.M."/>
            <person name="Loveland J."/>
            <person name="Lovell J."/>
            <person name="Lush M.J."/>
            <person name="Lyne R."/>
            <person name="Martin S."/>
            <person name="Mashreghi-Mohammadi M."/>
            <person name="Matthews L."/>
            <person name="Matthews N.S.W."/>
            <person name="McLaren S."/>
            <person name="Milne S."/>
            <person name="Mistry S."/>
            <person name="Moore M.J.F."/>
            <person name="Nickerson T."/>
            <person name="O'Dell C.N."/>
            <person name="Oliver K."/>
            <person name="Palmeiri A."/>
            <person name="Palmer S.A."/>
            <person name="Parker A."/>
            <person name="Patel D."/>
            <person name="Pearce A.V."/>
            <person name="Peck A.I."/>
            <person name="Pelan S."/>
            <person name="Phelps K."/>
            <person name="Phillimore B.J."/>
            <person name="Plumb R."/>
            <person name="Rajan J."/>
            <person name="Raymond C."/>
            <person name="Rouse G."/>
            <person name="Saenphimmachak C."/>
            <person name="Sehra H.K."/>
            <person name="Sheridan E."/>
            <person name="Shownkeen R."/>
            <person name="Sims S."/>
            <person name="Skuce C.D."/>
            <person name="Smith M."/>
            <person name="Steward C."/>
            <person name="Subramanian S."/>
            <person name="Sycamore N."/>
            <person name="Tracey A."/>
            <person name="Tromans A."/>
            <person name="Van Helmond Z."/>
            <person name="Wall M."/>
            <person name="Wallis J.M."/>
            <person name="White S."/>
            <person name="Whitehead S.L."/>
            <person name="Wilkinson J.E."/>
            <person name="Willey D.L."/>
            <person name="Williams H."/>
            <person name="Wilming L."/>
            <person name="Wray P.W."/>
            <person name="Wu Z."/>
            <person name="Coulson A."/>
            <person name="Vaudin M."/>
            <person name="Sulston J.E."/>
            <person name="Durbin R.M."/>
            <person name="Hubbard T."/>
            <person name="Wooster R."/>
            <person name="Dunham I."/>
            <person name="Carter N.P."/>
            <person name="McVean G."/>
            <person name="Ross M.T."/>
            <person name="Harrow J."/>
            <person name="Olson M.V."/>
            <person name="Beck S."/>
            <person name="Rogers J."/>
            <person name="Bentley D.R."/>
        </authorList>
    </citation>
    <scope>NUCLEOTIDE SEQUENCE [LARGE SCALE GENOMIC DNA]</scope>
</reference>
<reference key="4">
    <citation type="submission" date="2005-09" db="EMBL/GenBank/DDBJ databases">
        <authorList>
            <person name="Mural R.J."/>
            <person name="Istrail S."/>
            <person name="Sutton G.G."/>
            <person name="Florea L."/>
            <person name="Halpern A.L."/>
            <person name="Mobarry C.M."/>
            <person name="Lippert R."/>
            <person name="Walenz B."/>
            <person name="Shatkay H."/>
            <person name="Dew I."/>
            <person name="Miller J.R."/>
            <person name="Flanigan M.J."/>
            <person name="Edwards N.J."/>
            <person name="Bolanos R."/>
            <person name="Fasulo D."/>
            <person name="Halldorsson B.V."/>
            <person name="Hannenhalli S."/>
            <person name="Turner R."/>
            <person name="Yooseph S."/>
            <person name="Lu F."/>
            <person name="Nusskern D.R."/>
            <person name="Shue B.C."/>
            <person name="Zheng X.H."/>
            <person name="Zhong F."/>
            <person name="Delcher A.L."/>
            <person name="Huson D.H."/>
            <person name="Kravitz S.A."/>
            <person name="Mouchard L."/>
            <person name="Reinert K."/>
            <person name="Remington K.A."/>
            <person name="Clark A.G."/>
            <person name="Waterman M.S."/>
            <person name="Eichler E.E."/>
            <person name="Adams M.D."/>
            <person name="Hunkapiller M.W."/>
            <person name="Myers E.W."/>
            <person name="Venter J.C."/>
        </authorList>
    </citation>
    <scope>NUCLEOTIDE SEQUENCE [LARGE SCALE GENOMIC DNA]</scope>
</reference>
<reference key="5">
    <citation type="journal article" date="2004" name="Genome Res.">
        <title>The status, quality, and expansion of the NIH full-length cDNA project: the Mammalian Gene Collection (MGC).</title>
        <authorList>
            <consortium name="The MGC Project Team"/>
        </authorList>
    </citation>
    <scope>NUCLEOTIDE SEQUENCE [LARGE SCALE MRNA]</scope>
    <source>
        <tissue>Colon</tissue>
    </source>
</reference>
<reference key="6">
    <citation type="journal article" date="2008" name="Mol. Cell. Biochem.">
        <title>hBolA, novel non-classical secreted proteins, belonging to different BolA family with functional divergence.</title>
        <authorList>
            <person name="Zhou Y.B."/>
            <person name="Cao J.B."/>
            <person name="Wan B.B."/>
            <person name="Wang X.R."/>
            <person name="Ding G.H."/>
            <person name="Zhu H."/>
            <person name="Yang H.M."/>
            <person name="Wang K.S."/>
            <person name="Zhang X."/>
            <person name="Han Z.G."/>
        </authorList>
    </citation>
    <scope>TISSUE SPECIFICITY</scope>
</reference>
<reference key="7">
    <citation type="journal article" date="2011" name="BMC Syst. Biol.">
        <title>Initial characterization of the human central proteome.</title>
        <authorList>
            <person name="Burkard T.R."/>
            <person name="Planyavsky M."/>
            <person name="Kaupe I."/>
            <person name="Breitwieser F.P."/>
            <person name="Buerckstuemmer T."/>
            <person name="Bennett K.L."/>
            <person name="Superti-Furga G."/>
            <person name="Colinge J."/>
        </authorList>
    </citation>
    <scope>IDENTIFICATION BY MASS SPECTROMETRY [LARGE SCALE ANALYSIS]</scope>
</reference>
<reference key="8">
    <citation type="journal article" date="2013" name="Antioxid. Redox Signal.">
        <title>BOLA1 is an aerobic protein that prevents mitochondrial morphology changes induced by glutathione depletion.</title>
        <authorList>
            <person name="Willems P."/>
            <person name="Wanschers B.F."/>
            <person name="Esseling J."/>
            <person name="Szklarczyk R."/>
            <person name="Kudla U."/>
            <person name="Duarte I."/>
            <person name="Forkink M."/>
            <person name="Nooteboom M."/>
            <person name="Swarts H."/>
            <person name="Gloerich J."/>
            <person name="Nijtmans L."/>
            <person name="Koopman W."/>
            <person name="Huynen M.A."/>
        </authorList>
    </citation>
    <scope>FUNCTION</scope>
    <scope>SUBCELLULAR LOCATION</scope>
    <scope>INTERACTION WITH GLRX5</scope>
</reference>
<reference key="9">
    <citation type="journal article" date="2016" name="Elife">
        <title>Role of Nfu1 and Bol3 in iron-sulfur cluster transfer to mitochondrial clients.</title>
        <authorList>
            <person name="Melber A."/>
            <person name="Na U."/>
            <person name="Vashisht A."/>
            <person name="Weiler B.D."/>
            <person name="Lill R."/>
            <person name="Wohlschlegel J.A."/>
            <person name="Winge D.R."/>
        </authorList>
    </citation>
    <scope>INTERACTION WITH GLRX5</scope>
</reference>
<reference evidence="13" key="10">
    <citation type="journal article" date="2016" name="Elife">
        <title>Mitochondrial Bol1 and Bol3 function as assembly factors for specific iron-sulfur proteins.</title>
        <authorList>
            <person name="Uzarska M.A."/>
            <person name="Nasta V."/>
            <person name="Weiler B.D."/>
            <person name="Spantgar F."/>
            <person name="Ciofi-Baffoni S."/>
            <person name="Saviello M.R."/>
            <person name="Gonnelli L."/>
            <person name="Muehlenhoff U."/>
            <person name="Banci L."/>
            <person name="Lill R."/>
        </authorList>
    </citation>
    <scope>STRUCTURE BY NMR OF 21-137</scope>
    <scope>INTERACTION WITH GLRX5</scope>
</reference>
<accession>Q9Y3E2</accession>
<accession>B2R7K2</accession>
<accession>D3DUZ4</accession>
<accession>Q5QNY0</accession>
<name>BOLA1_HUMAN</name>
<gene>
    <name evidence="12" type="primary">BOLA1</name>
    <name evidence="8" type="ORF">CGI-143</name>
</gene>
<dbReference type="EMBL" id="AF151901">
    <property type="protein sequence ID" value="AAD34138.1"/>
    <property type="molecule type" value="mRNA"/>
</dbReference>
<dbReference type="EMBL" id="AK313014">
    <property type="protein sequence ID" value="BAG35849.1"/>
    <property type="molecule type" value="mRNA"/>
</dbReference>
<dbReference type="EMBL" id="AL591493">
    <property type="protein sequence ID" value="CAI12571.1"/>
    <property type="molecule type" value="Genomic_DNA"/>
</dbReference>
<dbReference type="EMBL" id="CH471121">
    <property type="protein sequence ID" value="EAW53599.1"/>
    <property type="molecule type" value="Genomic_DNA"/>
</dbReference>
<dbReference type="EMBL" id="CH471121">
    <property type="protein sequence ID" value="EAW53600.1"/>
    <property type="molecule type" value="Genomic_DNA"/>
</dbReference>
<dbReference type="EMBL" id="CH471121">
    <property type="protein sequence ID" value="EAW53601.1"/>
    <property type="molecule type" value="Genomic_DNA"/>
</dbReference>
<dbReference type="EMBL" id="CH471121">
    <property type="protein sequence ID" value="EAW53602.1"/>
    <property type="molecule type" value="Genomic_DNA"/>
</dbReference>
<dbReference type="EMBL" id="BC063405">
    <property type="protein sequence ID" value="AAH63405.1"/>
    <property type="molecule type" value="mRNA"/>
</dbReference>
<dbReference type="CCDS" id="CCDS939.1"/>
<dbReference type="RefSeq" id="NP_001307954.1">
    <property type="nucleotide sequence ID" value="NM_001321025.2"/>
</dbReference>
<dbReference type="RefSeq" id="NP_001307955.1">
    <property type="nucleotide sequence ID" value="NM_001321026.2"/>
</dbReference>
<dbReference type="RefSeq" id="NP_057158.1">
    <property type="nucleotide sequence ID" value="NM_016074.5"/>
</dbReference>
<dbReference type="RefSeq" id="XP_006711411.1">
    <property type="nucleotide sequence ID" value="XM_006711348.4"/>
</dbReference>
<dbReference type="RefSeq" id="XP_054192818.1">
    <property type="nucleotide sequence ID" value="XM_054336843.1"/>
</dbReference>
<dbReference type="RefSeq" id="XP_054192819.1">
    <property type="nucleotide sequence ID" value="XM_054336844.1"/>
</dbReference>
<dbReference type="RefSeq" id="XP_054192820.1">
    <property type="nucleotide sequence ID" value="XM_054336845.1"/>
</dbReference>
<dbReference type="RefSeq" id="XP_054192821.1">
    <property type="nucleotide sequence ID" value="XM_054336846.1"/>
</dbReference>
<dbReference type="RefSeq" id="XP_054192822.1">
    <property type="nucleotide sequence ID" value="XM_054336847.1"/>
</dbReference>
<dbReference type="PDB" id="5LCI">
    <property type="method" value="NMR"/>
    <property type="chains" value="A=21-137"/>
</dbReference>
<dbReference type="PDBsum" id="5LCI"/>
<dbReference type="SMR" id="Q9Y3E2"/>
<dbReference type="BioGRID" id="119233">
    <property type="interactions" value="36"/>
</dbReference>
<dbReference type="ComplexPortal" id="CPX-6862">
    <property type="entry name" value="Mitochondrial BOLA1-GLRX5 iron-sulfur cluster assembly complex"/>
</dbReference>
<dbReference type="FunCoup" id="Q9Y3E2">
    <property type="interactions" value="807"/>
</dbReference>
<dbReference type="IntAct" id="Q9Y3E2">
    <property type="interactions" value="37"/>
</dbReference>
<dbReference type="MINT" id="Q9Y3E2"/>
<dbReference type="STRING" id="9606.ENSP00000358149"/>
<dbReference type="GlyGen" id="Q9Y3E2">
    <property type="glycosylation" value="2 sites, 1 N-linked glycan (1 site), 1 O-linked glycan (1 site)"/>
</dbReference>
<dbReference type="iPTMnet" id="Q9Y3E2"/>
<dbReference type="PhosphoSitePlus" id="Q9Y3E2"/>
<dbReference type="BioMuta" id="BOLA1"/>
<dbReference type="DMDM" id="8134821"/>
<dbReference type="jPOST" id="Q9Y3E2"/>
<dbReference type="MassIVE" id="Q9Y3E2"/>
<dbReference type="PaxDb" id="9606-ENSP00000358149"/>
<dbReference type="PeptideAtlas" id="Q9Y3E2"/>
<dbReference type="ProteomicsDB" id="86029"/>
<dbReference type="Pumba" id="Q9Y3E2"/>
<dbReference type="Antibodypedia" id="1825">
    <property type="antibodies" value="178 antibodies from 25 providers"/>
</dbReference>
<dbReference type="DNASU" id="51027"/>
<dbReference type="Ensembl" id="ENST00000369150.1">
    <property type="protein sequence ID" value="ENSP00000358146.1"/>
    <property type="gene ID" value="ENSG00000178096.9"/>
</dbReference>
<dbReference type="Ensembl" id="ENST00000369152.6">
    <property type="protein sequence ID" value="ENSP00000358148.5"/>
    <property type="gene ID" value="ENSG00000178096.9"/>
</dbReference>
<dbReference type="Ensembl" id="ENST00000369153.2">
    <property type="protein sequence ID" value="ENSP00000358149.1"/>
    <property type="gene ID" value="ENSG00000178096.9"/>
</dbReference>
<dbReference type="GeneID" id="51027"/>
<dbReference type="KEGG" id="hsa:51027"/>
<dbReference type="MANE-Select" id="ENST00000369152.6">
    <property type="protein sequence ID" value="ENSP00000358148.5"/>
    <property type="RefSeq nucleotide sequence ID" value="NM_016074.5"/>
    <property type="RefSeq protein sequence ID" value="NP_057158.1"/>
</dbReference>
<dbReference type="UCSC" id="uc001etf.4">
    <property type="organism name" value="human"/>
</dbReference>
<dbReference type="AGR" id="HGNC:24263"/>
<dbReference type="CTD" id="51027"/>
<dbReference type="DisGeNET" id="51027"/>
<dbReference type="GeneCards" id="BOLA1"/>
<dbReference type="HGNC" id="HGNC:24263">
    <property type="gene designation" value="BOLA1"/>
</dbReference>
<dbReference type="HPA" id="ENSG00000178096">
    <property type="expression patterns" value="Low tissue specificity"/>
</dbReference>
<dbReference type="MalaCards" id="BOLA1"/>
<dbReference type="MIM" id="613181">
    <property type="type" value="gene"/>
</dbReference>
<dbReference type="neXtProt" id="NX_Q9Y3E2"/>
<dbReference type="OpenTargets" id="ENSG00000178096"/>
<dbReference type="PharmGKB" id="PA142672552"/>
<dbReference type="VEuPathDB" id="HostDB:ENSG00000178096"/>
<dbReference type="eggNOG" id="KOG2313">
    <property type="taxonomic scope" value="Eukaryota"/>
</dbReference>
<dbReference type="GeneTree" id="ENSGT00510000048165"/>
<dbReference type="HOGENOM" id="CLU_109462_3_0_1"/>
<dbReference type="InParanoid" id="Q9Y3E2"/>
<dbReference type="OMA" id="CLGGFGK"/>
<dbReference type="OrthoDB" id="4983at2759"/>
<dbReference type="PAN-GO" id="Q9Y3E2">
    <property type="GO annotations" value="1 GO annotation based on evolutionary models"/>
</dbReference>
<dbReference type="PhylomeDB" id="Q9Y3E2"/>
<dbReference type="TreeFam" id="TF354266"/>
<dbReference type="PathwayCommons" id="Q9Y3E2"/>
<dbReference type="SignaLink" id="Q9Y3E2"/>
<dbReference type="BioGRID-ORCS" id="51027">
    <property type="hits" value="6 hits in 1146 CRISPR screens"/>
</dbReference>
<dbReference type="GenomeRNAi" id="51027"/>
<dbReference type="Pharos" id="Q9Y3E2">
    <property type="development level" value="Tbio"/>
</dbReference>
<dbReference type="PRO" id="PR:Q9Y3E2"/>
<dbReference type="Proteomes" id="UP000005640">
    <property type="component" value="Chromosome 1"/>
</dbReference>
<dbReference type="RNAct" id="Q9Y3E2">
    <property type="molecule type" value="protein"/>
</dbReference>
<dbReference type="Bgee" id="ENSG00000178096">
    <property type="expression patterns" value="Expressed in primordial germ cell in gonad and 118 other cell types or tissues"/>
</dbReference>
<dbReference type="GO" id="GO:1990229">
    <property type="term" value="C:iron-sulfur cluster assembly complex"/>
    <property type="evidence" value="ECO:0000353"/>
    <property type="project" value="ComplexPortal"/>
</dbReference>
<dbReference type="GO" id="GO:0005739">
    <property type="term" value="C:mitochondrion"/>
    <property type="evidence" value="ECO:0000314"/>
    <property type="project" value="UniProtKB"/>
</dbReference>
<dbReference type="GO" id="GO:0045454">
    <property type="term" value="P:cell redox homeostasis"/>
    <property type="evidence" value="ECO:0000303"/>
    <property type="project" value="ComplexPortal"/>
</dbReference>
<dbReference type="GO" id="GO:0006879">
    <property type="term" value="P:intracellular iron ion homeostasis"/>
    <property type="evidence" value="ECO:0000303"/>
    <property type="project" value="ComplexPortal"/>
</dbReference>
<dbReference type="GO" id="GO:0016226">
    <property type="term" value="P:iron-sulfur cluster assembly"/>
    <property type="evidence" value="ECO:0000303"/>
    <property type="project" value="ComplexPortal"/>
</dbReference>
<dbReference type="FunFam" id="3.30.300.90:FF:000001">
    <property type="entry name" value="Transcriptional regulator BolA"/>
    <property type="match status" value="1"/>
</dbReference>
<dbReference type="Gene3D" id="3.30.300.90">
    <property type="entry name" value="BolA-like"/>
    <property type="match status" value="1"/>
</dbReference>
<dbReference type="InterPro" id="IPR002634">
    <property type="entry name" value="BolA"/>
</dbReference>
<dbReference type="InterPro" id="IPR036065">
    <property type="entry name" value="BolA-like_sf"/>
</dbReference>
<dbReference type="InterPro" id="IPR050961">
    <property type="entry name" value="BolA/IbaG_stress_morph_reg"/>
</dbReference>
<dbReference type="PANTHER" id="PTHR46229">
    <property type="entry name" value="BOLA TRANSCRIPTION REGULATOR"/>
    <property type="match status" value="1"/>
</dbReference>
<dbReference type="PANTHER" id="PTHR46229:SF2">
    <property type="entry name" value="BOLA-LIKE PROTEIN 1"/>
    <property type="match status" value="1"/>
</dbReference>
<dbReference type="Pfam" id="PF01722">
    <property type="entry name" value="BolA"/>
    <property type="match status" value="1"/>
</dbReference>
<dbReference type="SUPFAM" id="SSF82657">
    <property type="entry name" value="BolA-like"/>
    <property type="match status" value="1"/>
</dbReference>
<sequence>MLSGRLVLGLVSMAGRVCLCQGSAGSGAIGPVEAAIRTKLEEALSPEVLELRNESGGHAVPPGSETHFRVAVVSSRFEGLSPLQRHRLVHAALAEELGGPVHALAIQARTPAQWRENSQLDTSPPCLGGNKKTLGTP</sequence>
<comment type="function">
    <text evidence="1 5 11">Acts as a mitochondrial iron-sulfur (Fe-S) cluster assembly factor that facilitates (Fe-S) cluster insertion into a subset of mitochondrial proteins (By similarity). Probably acts together with the monothiol glutaredoxin GLRX5 (PubMed:27532772). May protect cells against oxidative stress (PubMed:22746225).</text>
</comment>
<comment type="subunit">
    <text evidence="5 6 7">Interacts with GLRX5 (PubMed:22746225, PubMed:27532772, PubMed:27532773).</text>
</comment>
<comment type="interaction">
    <interactant intactId="EBI-1049556">
        <id>Q9Y3E2</id>
    </interactant>
    <interactant intactId="EBI-514538">
        <id>Q13490</id>
        <label>BIRC2</label>
    </interactant>
    <organismsDiffer>false</organismsDiffer>
    <experiments>7</experiments>
</comment>
<comment type="interaction">
    <interactant intactId="EBI-1049556">
        <id>Q9Y3E2</id>
    </interactant>
    <interactant intactId="EBI-517623">
        <id>Q96CA5</id>
        <label>BIRC7</label>
    </interactant>
    <organismsDiffer>false</organismsDiffer>
    <experiments>3</experiments>
</comment>
<comment type="interaction">
    <interactant intactId="EBI-1049556">
        <id>Q9Y3E2</id>
    </interactant>
    <interactant intactId="EBI-946029">
        <id>Q6P1W5</id>
        <label>C1orf94</label>
    </interactant>
    <organismsDiffer>false</organismsDiffer>
    <experiments>3</experiments>
</comment>
<comment type="interaction">
    <interactant intactId="EBI-1049556">
        <id>Q9Y3E2</id>
    </interactant>
    <interactant intactId="EBI-374781">
        <id>O76003</id>
        <label>GLRX3</label>
    </interactant>
    <organismsDiffer>false</organismsDiffer>
    <experiments>16</experiments>
</comment>
<comment type="interaction">
    <interactant intactId="EBI-1049556">
        <id>Q9Y3E2</id>
    </interactant>
    <interactant intactId="EBI-27823755">
        <id>PRO_0000141650</id>
        <label>GLRX5</label>
        <dbReference type="UniProtKB" id="Q86SX6"/>
    </interactant>
    <organismsDiffer>false</organismsDiffer>
    <experiments>6</experiments>
</comment>
<comment type="interaction">
    <interactant intactId="EBI-1049556">
        <id>Q9Y3E2</id>
    </interactant>
    <interactant intactId="EBI-1052734">
        <id>Q7Z353</id>
        <label>HDX</label>
    </interactant>
    <organismsDiffer>false</organismsDiffer>
    <experiments>3</experiments>
</comment>
<comment type="interaction">
    <interactant intactId="EBI-1049556">
        <id>Q9Y3E2</id>
    </interactant>
    <interactant intactId="EBI-725252">
        <id>Q9UMS0</id>
        <label>NFU1</label>
    </interactant>
    <organismsDiffer>false</organismsDiffer>
    <experiments>2</experiments>
</comment>
<comment type="interaction">
    <interactant intactId="EBI-1049556">
        <id>Q9Y3E2</id>
    </interactant>
    <interactant intactId="EBI-18122152">
        <id>Q6F5E7</id>
        <label>TXNRD3NB</label>
    </interactant>
    <organismsDiffer>false</organismsDiffer>
    <experiments>3</experiments>
</comment>
<comment type="interaction">
    <interactant intactId="EBI-1049556">
        <id>Q9Y3E2</id>
    </interactant>
    <interactant intactId="EBI-517127">
        <id>P98170</id>
        <label>XIAP</label>
    </interactant>
    <organismsDiffer>false</organismsDiffer>
    <experiments>3</experiments>
</comment>
<comment type="interaction">
    <interactant intactId="EBI-1049556">
        <id>Q9Y3E2</id>
    </interactant>
    <interactant intactId="EBI-10172590">
        <id>Q7Z3I7</id>
        <label>ZNF572</label>
    </interactant>
    <organismsDiffer>false</organismsDiffer>
    <experiments>3</experiments>
</comment>
<comment type="subcellular location">
    <subcellularLocation>
        <location evidence="5">Mitochondrion</location>
    </subcellularLocation>
</comment>
<comment type="tissue specificity">
    <text evidence="4">Widely expressed.</text>
</comment>
<comment type="similarity">
    <text evidence="10">Belongs to the BolA/IbaG family.</text>
</comment>
<comment type="caution">
    <text evidence="4 5">Was initially reported to be secreted via a non-classical export pathway (PubMed:18548201). It was however later shown that it localizes to mitochondria, in agreement with other members of the family (PubMed:22746225).</text>
</comment>
<proteinExistence type="evidence at protein level"/>
<evidence type="ECO:0000250" key="1">
    <source>
        <dbReference type="UniProtKB" id="Q3E793"/>
    </source>
</evidence>
<evidence type="ECO:0000250" key="2">
    <source>
        <dbReference type="UniProtKB" id="Q9D8S9"/>
    </source>
</evidence>
<evidence type="ECO:0000256" key="3">
    <source>
        <dbReference type="SAM" id="MobiDB-lite"/>
    </source>
</evidence>
<evidence type="ECO:0000269" key="4">
    <source>
    </source>
</evidence>
<evidence type="ECO:0000269" key="5">
    <source>
    </source>
</evidence>
<evidence type="ECO:0000269" key="6">
    <source>
    </source>
</evidence>
<evidence type="ECO:0000269" key="7">
    <source>
    </source>
</evidence>
<evidence type="ECO:0000303" key="8">
    <source>
    </source>
</evidence>
<evidence type="ECO:0000303" key="9">
    <source>
    </source>
</evidence>
<evidence type="ECO:0000305" key="10"/>
<evidence type="ECO:0000305" key="11">
    <source>
    </source>
</evidence>
<evidence type="ECO:0000312" key="12">
    <source>
        <dbReference type="HGNC" id="HGNC:24263"/>
    </source>
</evidence>
<evidence type="ECO:0007744" key="13">
    <source>
        <dbReference type="PDB" id="5LCI"/>
    </source>
</evidence>
<evidence type="ECO:0007829" key="14">
    <source>
        <dbReference type="PDB" id="5LCI"/>
    </source>
</evidence>
<feature type="chain" id="PRO_0000201233" description="BolA-like protein 1">
    <location>
        <begin position="1"/>
        <end position="137"/>
    </location>
</feature>
<feature type="region of interest" description="Disordered" evidence="3">
    <location>
        <begin position="114"/>
        <end position="137"/>
    </location>
</feature>
<feature type="modified residue" description="Phosphoserine" evidence="2">
    <location>
        <position position="81"/>
    </location>
</feature>
<feature type="sequence variant" id="VAR_033630" description="In dbSNP:rs1044808.">
    <original>G</original>
    <variation>A</variation>
    <location>
        <position position="98"/>
    </location>
</feature>
<feature type="helix" evidence="14">
    <location>
        <begin position="32"/>
        <end position="43"/>
    </location>
</feature>
<feature type="strand" evidence="14">
    <location>
        <begin position="47"/>
        <end position="53"/>
    </location>
</feature>
<feature type="helix" evidence="14">
    <location>
        <begin position="55"/>
        <end position="57"/>
    </location>
</feature>
<feature type="strand" evidence="14">
    <location>
        <begin position="67"/>
        <end position="73"/>
    </location>
</feature>
<feature type="helix" evidence="14">
    <location>
        <begin position="75"/>
        <end position="77"/>
    </location>
</feature>
<feature type="helix" evidence="14">
    <location>
        <begin position="82"/>
        <end position="92"/>
    </location>
</feature>
<feature type="helix" evidence="14">
    <location>
        <begin position="94"/>
        <end position="98"/>
    </location>
</feature>
<feature type="strand" evidence="14">
    <location>
        <begin position="102"/>
        <end position="109"/>
    </location>
</feature>
<feature type="helix" evidence="14">
    <location>
        <begin position="111"/>
        <end position="116"/>
    </location>
</feature>
<organism>
    <name type="scientific">Homo sapiens</name>
    <name type="common">Human</name>
    <dbReference type="NCBI Taxonomy" id="9606"/>
    <lineage>
        <taxon>Eukaryota</taxon>
        <taxon>Metazoa</taxon>
        <taxon>Chordata</taxon>
        <taxon>Craniata</taxon>
        <taxon>Vertebrata</taxon>
        <taxon>Euteleostomi</taxon>
        <taxon>Mammalia</taxon>
        <taxon>Eutheria</taxon>
        <taxon>Euarchontoglires</taxon>
        <taxon>Primates</taxon>
        <taxon>Haplorrhini</taxon>
        <taxon>Catarrhini</taxon>
        <taxon>Hominidae</taxon>
        <taxon>Homo</taxon>
    </lineage>
</organism>
<keyword id="KW-0002">3D-structure</keyword>
<keyword id="KW-0496">Mitochondrion</keyword>
<keyword id="KW-0597">Phosphoprotein</keyword>
<keyword id="KW-1267">Proteomics identification</keyword>
<keyword id="KW-1185">Reference proteome</keyword>
<protein>
    <recommendedName>
        <fullName evidence="10">BolA-like protein 1</fullName>
    </recommendedName>
    <alternativeName>
        <fullName evidence="9">hBolA</fullName>
    </alternativeName>
</protein>